<feature type="chain" id="PRO_0000123927" description="Histidinol-phosphate aminotransferase Rv2231c">
    <location>
        <begin position="1"/>
        <end position="364"/>
    </location>
</feature>
<feature type="modified residue" description="N6-(pyridoxal phosphate)lysine" evidence="1">
    <location>
        <position position="220"/>
    </location>
</feature>
<evidence type="ECO:0000250" key="1">
    <source>
        <dbReference type="UniProtKB" id="P9WML5"/>
    </source>
</evidence>
<evidence type="ECO:0000269" key="2">
    <source>
    </source>
</evidence>
<evidence type="ECO:0000269" key="3">
    <source>
    </source>
</evidence>
<evidence type="ECO:0000269" key="4">
    <source>
    </source>
</evidence>
<evidence type="ECO:0000303" key="5">
    <source>
    </source>
</evidence>
<evidence type="ECO:0000305" key="6"/>
<proteinExistence type="evidence at protein level"/>
<sequence>MLWILGPHTGPLLFDAVASLDTSPLAAARYHGDQDVAPGVLDFAVNVRHDRPPEWLVRQLAALLPELARYPSTDDVHRAQDAVAERHGRTRDEVLPLVGAAEGFALLHNLSPVRAAIVVPAFTEPAIALSAAGITAHHVVLKPPFVLDTAHVPDDADLVVVGNPTNPTSVLHLREQLLELRRPGRILVVDEAFADWVPGEPQSLADDSLPDVLVLRSLTKTWSLAGLRVGYALGSPDVLARLTVQRAHWPLGTLQLTAIAACCAPRAVAAAAADAVRLTALRAEMVAGLRSVGAEVVDGAAPFVLFNIADADGLRNYLQSKGIAVRRGDTFVGLDARYLRAAVRPEWPVLVAAIAEWAKRGGRR</sequence>
<dbReference type="EC" id="2.6.1.9" evidence="4"/>
<dbReference type="EMBL" id="AL123456">
    <property type="protein sequence ID" value="CCP45009.1"/>
    <property type="molecule type" value="Genomic_DNA"/>
</dbReference>
<dbReference type="PIR" id="C70777">
    <property type="entry name" value="C70777"/>
</dbReference>
<dbReference type="RefSeq" id="WP_003411503.1">
    <property type="nucleotide sequence ID" value="NC_000962.3"/>
</dbReference>
<dbReference type="SMR" id="P9WQ89"/>
<dbReference type="STRING" id="83332.Rv2231c"/>
<dbReference type="PaxDb" id="83332-Rv2231c"/>
<dbReference type="DNASU" id="888337"/>
<dbReference type="KEGG" id="mtu:Rv2231c"/>
<dbReference type="KEGG" id="mtv:RVBD_2231c"/>
<dbReference type="PATRIC" id="fig|83332.111.peg.2482"/>
<dbReference type="TubercuList" id="Rv2231c"/>
<dbReference type="eggNOG" id="COG0079">
    <property type="taxonomic scope" value="Bacteria"/>
</dbReference>
<dbReference type="InParanoid" id="P9WQ89"/>
<dbReference type="OrthoDB" id="3401872at2"/>
<dbReference type="PhylomeDB" id="P9WQ89"/>
<dbReference type="Proteomes" id="UP000001584">
    <property type="component" value="Chromosome"/>
</dbReference>
<dbReference type="GO" id="GO:0005576">
    <property type="term" value="C:extracellular region"/>
    <property type="evidence" value="ECO:0007669"/>
    <property type="project" value="UniProtKB-SubCell"/>
</dbReference>
<dbReference type="GO" id="GO:0004400">
    <property type="term" value="F:histidinol-phosphate transaminase activity"/>
    <property type="evidence" value="ECO:0007669"/>
    <property type="project" value="RHEA"/>
</dbReference>
<dbReference type="GO" id="GO:0030170">
    <property type="term" value="F:pyridoxal phosphate binding"/>
    <property type="evidence" value="ECO:0007669"/>
    <property type="project" value="InterPro"/>
</dbReference>
<dbReference type="GO" id="GO:0009058">
    <property type="term" value="P:biosynthetic process"/>
    <property type="evidence" value="ECO:0007669"/>
    <property type="project" value="InterPro"/>
</dbReference>
<dbReference type="CDD" id="cd00609">
    <property type="entry name" value="AAT_like"/>
    <property type="match status" value="1"/>
</dbReference>
<dbReference type="Gene3D" id="3.90.1150.10">
    <property type="entry name" value="Aspartate Aminotransferase, domain 1"/>
    <property type="match status" value="1"/>
</dbReference>
<dbReference type="Gene3D" id="3.40.640.10">
    <property type="entry name" value="Type I PLP-dependent aspartate aminotransferase-like (Major domain)"/>
    <property type="match status" value="1"/>
</dbReference>
<dbReference type="InterPro" id="IPR004839">
    <property type="entry name" value="Aminotransferase_I/II_large"/>
</dbReference>
<dbReference type="InterPro" id="IPR004838">
    <property type="entry name" value="NHTrfase_class1_PyrdxlP-BS"/>
</dbReference>
<dbReference type="InterPro" id="IPR015424">
    <property type="entry name" value="PyrdxlP-dep_Trfase"/>
</dbReference>
<dbReference type="InterPro" id="IPR015421">
    <property type="entry name" value="PyrdxlP-dep_Trfase_major"/>
</dbReference>
<dbReference type="InterPro" id="IPR015422">
    <property type="entry name" value="PyrdxlP-dep_Trfase_small"/>
</dbReference>
<dbReference type="NCBIfam" id="NF005915">
    <property type="entry name" value="PRK07908.1"/>
    <property type="match status" value="1"/>
</dbReference>
<dbReference type="PANTHER" id="PTHR42885">
    <property type="entry name" value="HISTIDINOL-PHOSPHATE AMINOTRANSFERASE-RELATED"/>
    <property type="match status" value="1"/>
</dbReference>
<dbReference type="PANTHER" id="PTHR42885:SF1">
    <property type="entry name" value="THREONINE-PHOSPHATE DECARBOXYLASE"/>
    <property type="match status" value="1"/>
</dbReference>
<dbReference type="Pfam" id="PF00155">
    <property type="entry name" value="Aminotran_1_2"/>
    <property type="match status" value="1"/>
</dbReference>
<dbReference type="SUPFAM" id="SSF53383">
    <property type="entry name" value="PLP-dependent transferases"/>
    <property type="match status" value="1"/>
</dbReference>
<dbReference type="PROSITE" id="PS00105">
    <property type="entry name" value="AA_TRANSFER_CLASS_1"/>
    <property type="match status" value="1"/>
</dbReference>
<organism>
    <name type="scientific">Mycobacterium tuberculosis (strain ATCC 25618 / H37Rv)</name>
    <dbReference type="NCBI Taxonomy" id="83332"/>
    <lineage>
        <taxon>Bacteria</taxon>
        <taxon>Bacillati</taxon>
        <taxon>Actinomycetota</taxon>
        <taxon>Actinomycetes</taxon>
        <taxon>Mycobacteriales</taxon>
        <taxon>Mycobacteriaceae</taxon>
        <taxon>Mycobacterium</taxon>
        <taxon>Mycobacterium tuberculosis complex</taxon>
    </lineage>
</organism>
<name>HSPAT_MYCTU</name>
<protein>
    <recommendedName>
        <fullName evidence="5">Histidinol-phosphate aminotransferase Rv2231c</fullName>
        <shortName evidence="5">HspAT</shortName>
        <ecNumber evidence="4">2.6.1.9</ecNumber>
    </recommendedName>
</protein>
<accession>P9WQ89</accession>
<accession>L0T904</accession>
<accession>P63500</accession>
<accession>Q10503</accession>
<keyword id="KW-0032">Aminotransferase</keyword>
<keyword id="KW-0134">Cell wall</keyword>
<keyword id="KW-0663">Pyridoxal phosphate</keyword>
<keyword id="KW-1185">Reference proteome</keyword>
<keyword id="KW-0964">Secreted</keyword>
<keyword id="KW-0808">Transferase</keyword>
<reference key="1">
    <citation type="journal article" date="1998" name="Nature">
        <title>Deciphering the biology of Mycobacterium tuberculosis from the complete genome sequence.</title>
        <authorList>
            <person name="Cole S.T."/>
            <person name="Brosch R."/>
            <person name="Parkhill J."/>
            <person name="Garnier T."/>
            <person name="Churcher C.M."/>
            <person name="Harris D.E."/>
            <person name="Gordon S.V."/>
            <person name="Eiglmeier K."/>
            <person name="Gas S."/>
            <person name="Barry C.E. III"/>
            <person name="Tekaia F."/>
            <person name="Badcock K."/>
            <person name="Basham D."/>
            <person name="Brown D."/>
            <person name="Chillingworth T."/>
            <person name="Connor R."/>
            <person name="Davies R.M."/>
            <person name="Devlin K."/>
            <person name="Feltwell T."/>
            <person name="Gentles S."/>
            <person name="Hamlin N."/>
            <person name="Holroyd S."/>
            <person name="Hornsby T."/>
            <person name="Jagels K."/>
            <person name="Krogh A."/>
            <person name="McLean J."/>
            <person name="Moule S."/>
            <person name="Murphy L.D."/>
            <person name="Oliver S."/>
            <person name="Osborne J."/>
            <person name="Quail M.A."/>
            <person name="Rajandream M.A."/>
            <person name="Rogers J."/>
            <person name="Rutter S."/>
            <person name="Seeger K."/>
            <person name="Skelton S."/>
            <person name="Squares S."/>
            <person name="Squares R."/>
            <person name="Sulston J.E."/>
            <person name="Taylor K."/>
            <person name="Whitehead S."/>
            <person name="Barrell B.G."/>
        </authorList>
    </citation>
    <scope>NUCLEOTIDE SEQUENCE [LARGE SCALE GENOMIC DNA]</scope>
    <source>
        <strain>ATCC 25618 / H37Rv</strain>
    </source>
</reference>
<reference key="2">
    <citation type="journal article" date="2007" name="Microbiology">
        <title>Macrophage-specific Mycobacterium tuberculosis genes: identification by green fluorescent protein and kanamycin resistance selection.</title>
        <authorList>
            <person name="Srivastava V."/>
            <person name="Rouanet C."/>
            <person name="Srivastava R."/>
            <person name="Ramalingam B."/>
            <person name="Locht C."/>
            <person name="Srivastava B.S."/>
        </authorList>
    </citation>
    <scope>INDUCTION</scope>
    <source>
        <strain>H37Rv</strain>
    </source>
</reference>
<reference key="3">
    <citation type="journal article" date="2008" name="BMC Syst. Biol.">
        <title>targetTB: a target identification pipeline for Mycobacterium tuberculosis through an interactome, reactome and genome-scale structural analysis.</title>
        <authorList>
            <person name="Raman K."/>
            <person name="Yeturu K."/>
            <person name="Chandra N."/>
        </authorList>
    </citation>
    <scope>IDENTIFICATION AS A DRUG TARGET [LARGE SCALE ANALYSIS]</scope>
</reference>
<reference key="4">
    <citation type="journal article" date="2011" name="Mol. Cell. Proteomics">
        <title>Proteogenomic analysis of Mycobacterium tuberculosis by high resolution mass spectrometry.</title>
        <authorList>
            <person name="Kelkar D.S."/>
            <person name="Kumar D."/>
            <person name="Kumar P."/>
            <person name="Balakrishnan L."/>
            <person name="Muthusamy B."/>
            <person name="Yadav A.K."/>
            <person name="Shrivastava P."/>
            <person name="Marimuthu A."/>
            <person name="Anand S."/>
            <person name="Sundaram H."/>
            <person name="Kingsbury R."/>
            <person name="Harsha H.C."/>
            <person name="Nair B."/>
            <person name="Prasad T.S."/>
            <person name="Chauhan D.S."/>
            <person name="Katoch K."/>
            <person name="Katoch V.M."/>
            <person name="Kumar P."/>
            <person name="Chaerkady R."/>
            <person name="Ramachandran S."/>
            <person name="Dash D."/>
            <person name="Pandey A."/>
        </authorList>
    </citation>
    <scope>IDENTIFICATION BY MASS SPECTROMETRY [LARGE SCALE ANALYSIS]</scope>
    <source>
        <strain>ATCC 25618 / H37Rv</strain>
    </source>
</reference>
<reference key="5">
    <citation type="journal article" date="2024" name="Cell. Mol. Life Sci.">
        <title>Rv2231c, a unique histidinol phosphate aminotransferase from Mycobacterium tuberculosis, supports virulence by inhibiting host-directed defense.</title>
        <authorList>
            <person name="Zarin S."/>
            <person name="Shariq M."/>
            <person name="Rastogi N."/>
            <person name="Ahuja Y."/>
            <person name="Manjunath P."/>
            <person name="Alam A."/>
            <person name="Hasnain S.E."/>
            <person name="Ehtesham N.Z."/>
        </authorList>
    </citation>
    <scope>FUNCTION</scope>
    <scope>CATALYTIC ACTIVITY</scope>
    <scope>COFACTOR</scope>
    <scope>BIOPHYSICOCHEMICAL PROPERTIES</scope>
    <scope>SUBUNIT</scope>
    <scope>SUBCELLULAR LOCATION</scope>
    <source>
        <strain>H37Rv</strain>
    </source>
</reference>
<gene>
    <name type="ordered locus">Rv2231c</name>
    <name type="ORF">MTCY427.12c</name>
</gene>
<comment type="function">
    <text evidence="4">Aminotransferase that catalyzes the conversion of histidinol phosphate and 2-oxoglutarate into L-glutamate and imidazole acetol phosphate (PubMed:38698289). Might play a significant role in mediating histidine biosynthesis during infection (PubMed:38698289). Facilitates mycobacterial survival and virulence in macrophages (PubMed:38698289). Rv2231c is recognized by host TLR4 receptor at the macrophage cell surface to regulate downstream signaling cascades (PubMed:38698289). Inhibits macrophage activation and production of pro-inflammatory cytokines to dampen innate defense (PubMed:38698289). Can inhibit macrophage apoptosis (PubMed:38698289).</text>
</comment>
<comment type="catalytic activity">
    <reaction evidence="4">
        <text>L-histidinol phosphate + 2-oxoglutarate = 3-(imidazol-4-yl)-2-oxopropyl phosphate + L-glutamate</text>
        <dbReference type="Rhea" id="RHEA:23744"/>
        <dbReference type="ChEBI" id="CHEBI:16810"/>
        <dbReference type="ChEBI" id="CHEBI:29985"/>
        <dbReference type="ChEBI" id="CHEBI:57766"/>
        <dbReference type="ChEBI" id="CHEBI:57980"/>
        <dbReference type="EC" id="2.6.1.9"/>
    </reaction>
</comment>
<comment type="cofactor">
    <cofactor evidence="4">
        <name>pyridoxal 5'-phosphate</name>
        <dbReference type="ChEBI" id="CHEBI:597326"/>
    </cofactor>
</comment>
<comment type="biophysicochemical properties">
    <kinetics>
        <KM evidence="4">0.6 mM for histidinol phosphate</KM>
        <text evidence="4">kcat is 433 sec(-1).</text>
    </kinetics>
</comment>
<comment type="subunit">
    <text evidence="4">Monomer.</text>
</comment>
<comment type="subcellular location">
    <subcellularLocation>
        <location evidence="4">Secreted</location>
    </subcellularLocation>
    <subcellularLocation>
        <location evidence="4">Secreted</location>
        <location evidence="4">Cell wall</location>
    </subcellularLocation>
</comment>
<comment type="induction">
    <text evidence="2">Up-regulated during macrophage infection.</text>
</comment>
<comment type="miscellaneous">
    <text evidence="3">Was identified as a high-confidence drug target.</text>
</comment>
<comment type="similarity">
    <text evidence="6">Belongs to the class-I pyridoxal-phosphate-dependent aminotransferase family.</text>
</comment>